<feature type="chain" id="PRO_0000183444" description="Probable cytochrome c oxidase subunit 1">
    <location>
        <begin position="1"/>
        <end position="573"/>
    </location>
</feature>
<feature type="transmembrane region" description="Helical" evidence="2">
    <location>
        <begin position="40"/>
        <end position="60"/>
    </location>
</feature>
<feature type="transmembrane region" description="Helical" evidence="2">
    <location>
        <begin position="89"/>
        <end position="109"/>
    </location>
</feature>
<feature type="transmembrane region" description="Helical" evidence="2">
    <location>
        <begin position="121"/>
        <end position="141"/>
    </location>
</feature>
<feature type="transmembrane region" description="Helical" evidence="2">
    <location>
        <begin position="170"/>
        <end position="190"/>
    </location>
</feature>
<feature type="transmembrane region" description="Helical" evidence="2">
    <location>
        <begin position="213"/>
        <end position="233"/>
    </location>
</feature>
<feature type="transmembrane region" description="Helical" evidence="2">
    <location>
        <begin position="258"/>
        <end position="278"/>
    </location>
</feature>
<feature type="transmembrane region" description="Helical" evidence="2">
    <location>
        <begin position="290"/>
        <end position="310"/>
    </location>
</feature>
<feature type="transmembrane region" description="Helical" evidence="2">
    <location>
        <begin position="315"/>
        <end position="335"/>
    </location>
</feature>
<feature type="transmembrane region" description="Helical" evidence="2">
    <location>
        <begin position="359"/>
        <end position="379"/>
    </location>
</feature>
<feature type="transmembrane region" description="Helical" evidence="2">
    <location>
        <begin position="398"/>
        <end position="418"/>
    </location>
</feature>
<feature type="transmembrane region" description="Helical" evidence="2">
    <location>
        <begin position="433"/>
        <end position="453"/>
    </location>
</feature>
<feature type="transmembrane region" description="Helical" evidence="2">
    <location>
        <begin position="476"/>
        <end position="496"/>
    </location>
</feature>
<feature type="binding site" description="axial binding residue" evidence="3">
    <location>
        <position position="86"/>
    </location>
    <ligand>
        <name>Fe(II)-heme a</name>
        <dbReference type="ChEBI" id="CHEBI:61715"/>
    </ligand>
    <ligandPart>
        <name>Fe</name>
        <dbReference type="ChEBI" id="CHEBI:18248"/>
    </ligandPart>
</feature>
<feature type="binding site" evidence="3">
    <location>
        <position position="264"/>
    </location>
    <ligand>
        <name>Cu cation</name>
        <dbReference type="ChEBI" id="CHEBI:23378"/>
        <label>B</label>
    </ligand>
</feature>
<feature type="binding site" evidence="3">
    <location>
        <position position="268"/>
    </location>
    <ligand>
        <name>Cu cation</name>
        <dbReference type="ChEBI" id="CHEBI:23378"/>
        <label>B</label>
    </ligand>
</feature>
<feature type="binding site" evidence="3">
    <location>
        <position position="313"/>
    </location>
    <ligand>
        <name>Cu cation</name>
        <dbReference type="ChEBI" id="CHEBI:23378"/>
        <label>B</label>
    </ligand>
</feature>
<feature type="binding site" evidence="3">
    <location>
        <position position="314"/>
    </location>
    <ligand>
        <name>Cu cation</name>
        <dbReference type="ChEBI" id="CHEBI:23378"/>
        <label>B</label>
    </ligand>
</feature>
<feature type="binding site" description="axial binding residue" evidence="3">
    <location>
        <position position="397"/>
    </location>
    <ligand>
        <name>heme a3</name>
        <dbReference type="ChEBI" id="CHEBI:83282"/>
    </ligand>
    <ligandPart>
        <name>Fe</name>
        <dbReference type="ChEBI" id="CHEBI:18248"/>
    </ligandPart>
</feature>
<feature type="binding site" description="axial binding residue" evidence="3">
    <location>
        <position position="399"/>
    </location>
    <ligand>
        <name>Fe(II)-heme a</name>
        <dbReference type="ChEBI" id="CHEBI:61715"/>
    </ligand>
    <ligandPart>
        <name>Fe</name>
        <dbReference type="ChEBI" id="CHEBI:18248"/>
    </ligandPart>
</feature>
<feature type="cross-link" description="1'-histidyl-3'-tyrosine (His-Tyr)" evidence="1">
    <location>
        <begin position="264"/>
        <end position="268"/>
    </location>
</feature>
<proteinExistence type="inferred from homology"/>
<sequence>MTAEAPPLGELEAIRPYPARTGPKGSLVYKLITTTDHKMIGIMYCVACISFFFIGGLLALLMRTELAAPGLQFLSNEQFNQLFTMHGTIMLLFYATPIVFGFANLVLPLQIGAPDVAFPRLNAFSFWLFVFGATIGAAGFITPGGAADFGWTAYTPLTDAIHSPGAGGDLWIMGLIVAGLGTILGAVNMITTVVCMRAPGMTMFRMPIFTWNIMVTSILILIAFPLLTAALFGLAADRHLGAHIYDAANGGVLLWQHLFWFFGHPEVYIIALPFFGIVSEIFPVFSRKPIFGYTTLVYATLSIAALSVAVWAHHMFATGAVLLPFFSFMTYLIAVPTGIKFFNWIGTMWKGQLTFETPMLFSVGFMVTFLLGGLTGVLLASPPLDFHVTDSYFVVAHFHYVLFGTIVFATFAGIYFWFPKMTGRLLDERLGKLHFWLTFIGFHTTFLVQHWLGDEGMPRRYADYLPTDGFQGLNVVSTIGAFILGASMFPFVWNVFKSWRYGEVVTVDDPWGYGNSLEWATSCPPPRHNFTELPRIRSERPAFELHYPHMVERLRAEAHVGRHHDEPAMVTSS</sequence>
<gene>
    <name type="primary">ctaD</name>
    <name type="ordered locus">BQ2027_MB3069C</name>
</gene>
<comment type="function">
    <text evidence="1">Cytochrome c oxidase is the component of the respiratory chain that catalyzes the reduction of oxygen to water. Subunits 1-3 form the functional core of the enzyme complex. CO I is the catalytic subunit of the enzyme. Electrons originating in cytochrome c are transferred via the copper A center of subunit 2 and heme A of subunit 1 to the bimetallic center formed by heme A3 and copper B (By similarity).</text>
</comment>
<comment type="catalytic activity">
    <reaction>
        <text>4 Fe(II)-[cytochrome c] + O2 + 8 H(+)(in) = 4 Fe(III)-[cytochrome c] + 2 H2O + 4 H(+)(out)</text>
        <dbReference type="Rhea" id="RHEA:11436"/>
        <dbReference type="Rhea" id="RHEA-COMP:10350"/>
        <dbReference type="Rhea" id="RHEA-COMP:14399"/>
        <dbReference type="ChEBI" id="CHEBI:15377"/>
        <dbReference type="ChEBI" id="CHEBI:15378"/>
        <dbReference type="ChEBI" id="CHEBI:15379"/>
        <dbReference type="ChEBI" id="CHEBI:29033"/>
        <dbReference type="ChEBI" id="CHEBI:29034"/>
        <dbReference type="EC" id="7.1.1.9"/>
    </reaction>
</comment>
<comment type="pathway">
    <text>Energy metabolism; oxidative phosphorylation.</text>
</comment>
<comment type="subcellular location">
    <subcellularLocation>
        <location>Cell membrane</location>
        <topology>Multi-pass membrane protein</topology>
    </subcellularLocation>
</comment>
<comment type="similarity">
    <text evidence="3">Belongs to the heme-copper respiratory oxidase family.</text>
</comment>
<organism>
    <name type="scientific">Mycobacterium bovis (strain ATCC BAA-935 / AF2122/97)</name>
    <dbReference type="NCBI Taxonomy" id="233413"/>
    <lineage>
        <taxon>Bacteria</taxon>
        <taxon>Bacillati</taxon>
        <taxon>Actinomycetota</taxon>
        <taxon>Actinomycetes</taxon>
        <taxon>Mycobacteriales</taxon>
        <taxon>Mycobacteriaceae</taxon>
        <taxon>Mycobacterium</taxon>
        <taxon>Mycobacterium tuberculosis complex</taxon>
    </lineage>
</organism>
<reference key="1">
    <citation type="journal article" date="2003" name="Proc. Natl. Acad. Sci. U.S.A.">
        <title>The complete genome sequence of Mycobacterium bovis.</title>
        <authorList>
            <person name="Garnier T."/>
            <person name="Eiglmeier K."/>
            <person name="Camus J.-C."/>
            <person name="Medina N."/>
            <person name="Mansoor H."/>
            <person name="Pryor M."/>
            <person name="Duthoy S."/>
            <person name="Grondin S."/>
            <person name="Lacroix C."/>
            <person name="Monsempe C."/>
            <person name="Simon S."/>
            <person name="Harris B."/>
            <person name="Atkin R."/>
            <person name="Doggett J."/>
            <person name="Mayes R."/>
            <person name="Keating L."/>
            <person name="Wheeler P.R."/>
            <person name="Parkhill J."/>
            <person name="Barrell B.G."/>
            <person name="Cole S.T."/>
            <person name="Gordon S.V."/>
            <person name="Hewinson R.G."/>
        </authorList>
    </citation>
    <scope>NUCLEOTIDE SEQUENCE [LARGE SCALE GENOMIC DNA]</scope>
    <source>
        <strain>ATCC BAA-935 / AF2122/97</strain>
    </source>
</reference>
<reference key="2">
    <citation type="journal article" date="2017" name="Genome Announc.">
        <title>Updated reference genome sequence and annotation of Mycobacterium bovis AF2122/97.</title>
        <authorList>
            <person name="Malone K.M."/>
            <person name="Farrell D."/>
            <person name="Stuber T.P."/>
            <person name="Schubert O.T."/>
            <person name="Aebersold R."/>
            <person name="Robbe-Austerman S."/>
            <person name="Gordon S.V."/>
        </authorList>
    </citation>
    <scope>NUCLEOTIDE SEQUENCE [LARGE SCALE GENOMIC DNA]</scope>
    <scope>GENOME REANNOTATION</scope>
    <source>
        <strain>ATCC BAA-935 / AF2122/97</strain>
    </source>
</reference>
<evidence type="ECO:0000250" key="1"/>
<evidence type="ECO:0000255" key="2"/>
<evidence type="ECO:0000305" key="3"/>
<keyword id="KW-1003">Cell membrane</keyword>
<keyword id="KW-0186">Copper</keyword>
<keyword id="KW-0249">Electron transport</keyword>
<keyword id="KW-0349">Heme</keyword>
<keyword id="KW-0408">Iron</keyword>
<keyword id="KW-0472">Membrane</keyword>
<keyword id="KW-0479">Metal-binding</keyword>
<keyword id="KW-1185">Reference proteome</keyword>
<keyword id="KW-0679">Respiratory chain</keyword>
<keyword id="KW-1278">Translocase</keyword>
<keyword id="KW-0812">Transmembrane</keyword>
<keyword id="KW-1133">Transmembrane helix</keyword>
<keyword id="KW-0813">Transport</keyword>
<name>COX1_MYCBO</name>
<protein>
    <recommendedName>
        <fullName>Probable cytochrome c oxidase subunit 1</fullName>
        <ecNumber>7.1.1.9</ecNumber>
    </recommendedName>
    <alternativeName>
        <fullName>Cytochrome aa3 subunit 1</fullName>
    </alternativeName>
    <alternativeName>
        <fullName>Cytochrome c oxidase polypeptide I</fullName>
    </alternativeName>
</protein>
<dbReference type="EC" id="7.1.1.9"/>
<dbReference type="EMBL" id="LT708304">
    <property type="protein sequence ID" value="SIU01694.1"/>
    <property type="molecule type" value="Genomic_DNA"/>
</dbReference>
<dbReference type="RefSeq" id="NP_856714.1">
    <property type="nucleotide sequence ID" value="NC_002945.3"/>
</dbReference>
<dbReference type="RefSeq" id="WP_003415946.1">
    <property type="nucleotide sequence ID" value="NC_002945.4"/>
</dbReference>
<dbReference type="SMR" id="P63853"/>
<dbReference type="GeneID" id="45427036"/>
<dbReference type="KEGG" id="mbo:BQ2027_MB3069C"/>
<dbReference type="PATRIC" id="fig|233413.5.peg.3371"/>
<dbReference type="UniPathway" id="UPA00705"/>
<dbReference type="Proteomes" id="UP000001419">
    <property type="component" value="Chromosome"/>
</dbReference>
<dbReference type="GO" id="GO:0005886">
    <property type="term" value="C:plasma membrane"/>
    <property type="evidence" value="ECO:0007669"/>
    <property type="project" value="UniProtKB-SubCell"/>
</dbReference>
<dbReference type="GO" id="GO:0004129">
    <property type="term" value="F:cytochrome-c oxidase activity"/>
    <property type="evidence" value="ECO:0007669"/>
    <property type="project" value="UniProtKB-EC"/>
</dbReference>
<dbReference type="GO" id="GO:0020037">
    <property type="term" value="F:heme binding"/>
    <property type="evidence" value="ECO:0007669"/>
    <property type="project" value="InterPro"/>
</dbReference>
<dbReference type="GO" id="GO:0046872">
    <property type="term" value="F:metal ion binding"/>
    <property type="evidence" value="ECO:0007669"/>
    <property type="project" value="UniProtKB-KW"/>
</dbReference>
<dbReference type="GO" id="GO:0015990">
    <property type="term" value="P:electron transport coupled proton transport"/>
    <property type="evidence" value="ECO:0007669"/>
    <property type="project" value="InterPro"/>
</dbReference>
<dbReference type="GO" id="GO:0006119">
    <property type="term" value="P:oxidative phosphorylation"/>
    <property type="evidence" value="ECO:0007669"/>
    <property type="project" value="UniProtKB-UniPathway"/>
</dbReference>
<dbReference type="GO" id="GO:0022904">
    <property type="term" value="P:respiratory electron transport chain"/>
    <property type="evidence" value="ECO:0007669"/>
    <property type="project" value="TreeGrafter"/>
</dbReference>
<dbReference type="CDD" id="cd01662">
    <property type="entry name" value="Ubiquinol_Oxidase_I"/>
    <property type="match status" value="1"/>
</dbReference>
<dbReference type="FunFam" id="1.20.210.10:FF:000003">
    <property type="entry name" value="Cytochrome c oxidase subunit 1"/>
    <property type="match status" value="1"/>
</dbReference>
<dbReference type="Gene3D" id="1.20.210.10">
    <property type="entry name" value="Cytochrome c oxidase-like, subunit I domain"/>
    <property type="match status" value="1"/>
</dbReference>
<dbReference type="InterPro" id="IPR023616">
    <property type="entry name" value="Cyt_c_oxase-like_su1_dom"/>
</dbReference>
<dbReference type="InterPro" id="IPR036927">
    <property type="entry name" value="Cyt_c_oxase-like_su1_sf"/>
</dbReference>
<dbReference type="InterPro" id="IPR000883">
    <property type="entry name" value="Cyt_C_Oxase_1"/>
</dbReference>
<dbReference type="InterPro" id="IPR023615">
    <property type="entry name" value="Cyt_c_Oxase_su1_BS"/>
</dbReference>
<dbReference type="InterPro" id="IPR014241">
    <property type="entry name" value="Cyt_c_oxidase_su1_bac"/>
</dbReference>
<dbReference type="NCBIfam" id="TIGR02891">
    <property type="entry name" value="CtaD_CoxA"/>
    <property type="match status" value="1"/>
</dbReference>
<dbReference type="PANTHER" id="PTHR10422">
    <property type="entry name" value="CYTOCHROME C OXIDASE SUBUNIT 1"/>
    <property type="match status" value="1"/>
</dbReference>
<dbReference type="PANTHER" id="PTHR10422:SF18">
    <property type="entry name" value="CYTOCHROME C OXIDASE SUBUNIT 1"/>
    <property type="match status" value="1"/>
</dbReference>
<dbReference type="Pfam" id="PF00115">
    <property type="entry name" value="COX1"/>
    <property type="match status" value="1"/>
</dbReference>
<dbReference type="PRINTS" id="PR01165">
    <property type="entry name" value="CYCOXIDASEI"/>
</dbReference>
<dbReference type="SUPFAM" id="SSF81442">
    <property type="entry name" value="Cytochrome c oxidase subunit I-like"/>
    <property type="match status" value="1"/>
</dbReference>
<dbReference type="PROSITE" id="PS50855">
    <property type="entry name" value="COX1"/>
    <property type="match status" value="1"/>
</dbReference>
<dbReference type="PROSITE" id="PS00077">
    <property type="entry name" value="COX1_CUB"/>
    <property type="match status" value="1"/>
</dbReference>
<accession>P63853</accession>
<accession>A0A1R3Y2Z5</accession>
<accession>O53290</accession>
<accession>X2BMH9</accession>